<evidence type="ECO:0000255" key="1">
    <source>
        <dbReference type="HAMAP-Rule" id="MF_00445"/>
    </source>
</evidence>
<accession>P0CD14</accession>
<accession>B0Z5H2</accession>
<proteinExistence type="inferred from homology"/>
<gene>
    <name evidence="1" type="primary">ndhB1</name>
</gene>
<sequence length="510" mass="56573">MIWHVQNENLILDSTRIFMKAFHLPLFDGSFIFPEGILIFGLILLLMIDSTSDQTDIPWFYFISSISLVMSITALLFRWREEPRILFSGNFQTNNFNEIFQFLILLCSTLCIPLSVEYIECTEMAITEFLLFVLTATLGGMFLCGANDLITIFVAPECFSLCSYLLSGYTKKDVRSNEATMKYLLMGGASSSILVHGFSWLYGSSGGEIELQEIVNGLINTQMYNSPGISIALIFITVGIGFKLSPAPSHQWTPDVYEGSPTPVVAFLSVTSKVAASASATRIFDIPFYFSSNEWHPLLEILAILSMILGNLIAITQTSMKRMLAYSSIGQIGYVIIGIIVGDANGGYASMITYMLFYISMNLGTFACIVLFGLRTGTDNIRDYAGLYTKDPFLALSLALCLLSLGGLPPLAGFFGKLHLFWCGWQAGLYFLVSIGLFTSVVSIYYYLKIIKLLMTGRKQEITPHVRNYRRSPLRSNNSIELSMIVCVIASTIPGISMNPIIAIAQDTLF</sequence>
<name>NU2C1_OENPA</name>
<geneLocation type="chloroplast"/>
<organism>
    <name type="scientific">Oenothera parviflora</name>
    <name type="common">Small-flowered evening primrose</name>
    <name type="synonym">Oenothera cruciata</name>
    <dbReference type="NCBI Taxonomy" id="482429"/>
    <lineage>
        <taxon>Eukaryota</taxon>
        <taxon>Viridiplantae</taxon>
        <taxon>Streptophyta</taxon>
        <taxon>Embryophyta</taxon>
        <taxon>Tracheophyta</taxon>
        <taxon>Spermatophyta</taxon>
        <taxon>Magnoliopsida</taxon>
        <taxon>eudicotyledons</taxon>
        <taxon>Gunneridae</taxon>
        <taxon>Pentapetalae</taxon>
        <taxon>rosids</taxon>
        <taxon>malvids</taxon>
        <taxon>Myrtales</taxon>
        <taxon>Onagraceae</taxon>
        <taxon>Onagroideae</taxon>
        <taxon>Onagreae</taxon>
        <taxon>Oenothera</taxon>
    </lineage>
</organism>
<dbReference type="EC" id="7.1.1.-" evidence="1"/>
<dbReference type="EMBL" id="EU262891">
    <property type="protein sequence ID" value="ABX10165.1"/>
    <property type="molecule type" value="Genomic_DNA"/>
</dbReference>
<dbReference type="SMR" id="P0CD14"/>
<dbReference type="GO" id="GO:0009535">
    <property type="term" value="C:chloroplast thylakoid membrane"/>
    <property type="evidence" value="ECO:0007669"/>
    <property type="project" value="UniProtKB-SubCell"/>
</dbReference>
<dbReference type="GO" id="GO:0008137">
    <property type="term" value="F:NADH dehydrogenase (ubiquinone) activity"/>
    <property type="evidence" value="ECO:0007669"/>
    <property type="project" value="InterPro"/>
</dbReference>
<dbReference type="GO" id="GO:0048038">
    <property type="term" value="F:quinone binding"/>
    <property type="evidence" value="ECO:0007669"/>
    <property type="project" value="UniProtKB-KW"/>
</dbReference>
<dbReference type="GO" id="GO:0042773">
    <property type="term" value="P:ATP synthesis coupled electron transport"/>
    <property type="evidence" value="ECO:0007669"/>
    <property type="project" value="InterPro"/>
</dbReference>
<dbReference type="GO" id="GO:0019684">
    <property type="term" value="P:photosynthesis, light reaction"/>
    <property type="evidence" value="ECO:0007669"/>
    <property type="project" value="UniProtKB-UniRule"/>
</dbReference>
<dbReference type="HAMAP" id="MF_00445">
    <property type="entry name" value="NDH1_NuoN_1"/>
    <property type="match status" value="1"/>
</dbReference>
<dbReference type="InterPro" id="IPR010096">
    <property type="entry name" value="NADH-Q_OxRdtase_suN/2"/>
</dbReference>
<dbReference type="InterPro" id="IPR001750">
    <property type="entry name" value="ND/Mrp_TM"/>
</dbReference>
<dbReference type="InterPro" id="IPR045693">
    <property type="entry name" value="Ndh2_N"/>
</dbReference>
<dbReference type="NCBIfam" id="TIGR01770">
    <property type="entry name" value="NDH_I_N"/>
    <property type="match status" value="1"/>
</dbReference>
<dbReference type="NCBIfam" id="NF002701">
    <property type="entry name" value="PRK02504.1"/>
    <property type="match status" value="1"/>
</dbReference>
<dbReference type="PANTHER" id="PTHR22773">
    <property type="entry name" value="NADH DEHYDROGENASE"/>
    <property type="match status" value="1"/>
</dbReference>
<dbReference type="Pfam" id="PF19530">
    <property type="entry name" value="Ndh2_N"/>
    <property type="match status" value="1"/>
</dbReference>
<dbReference type="Pfam" id="PF00361">
    <property type="entry name" value="Proton_antipo_M"/>
    <property type="match status" value="1"/>
</dbReference>
<feature type="chain" id="PRO_0000344278" description="NAD(P)H-quinone oxidoreductase subunit 2 A, chloroplastic">
    <location>
        <begin position="1"/>
        <end position="510"/>
    </location>
</feature>
<feature type="transmembrane region" description="Helical" evidence="1">
    <location>
        <begin position="26"/>
        <end position="46"/>
    </location>
</feature>
<feature type="transmembrane region" description="Helical" evidence="1">
    <location>
        <begin position="57"/>
        <end position="77"/>
    </location>
</feature>
<feature type="transmembrane region" description="Helical" evidence="1">
    <location>
        <begin position="99"/>
        <end position="119"/>
    </location>
</feature>
<feature type="transmembrane region" description="Helical" evidence="1">
    <location>
        <begin position="124"/>
        <end position="144"/>
    </location>
</feature>
<feature type="transmembrane region" description="Helical" evidence="1">
    <location>
        <begin position="149"/>
        <end position="169"/>
    </location>
</feature>
<feature type="transmembrane region" description="Helical" evidence="1">
    <location>
        <begin position="183"/>
        <end position="203"/>
    </location>
</feature>
<feature type="transmembrane region" description="Helical" evidence="1">
    <location>
        <begin position="227"/>
        <end position="247"/>
    </location>
</feature>
<feature type="transmembrane region" description="Helical" evidence="1">
    <location>
        <begin position="295"/>
        <end position="315"/>
    </location>
</feature>
<feature type="transmembrane region" description="Helical" evidence="1">
    <location>
        <begin position="323"/>
        <end position="342"/>
    </location>
</feature>
<feature type="transmembrane region" description="Helical" evidence="1">
    <location>
        <begin position="354"/>
        <end position="374"/>
    </location>
</feature>
<feature type="transmembrane region" description="Helical" evidence="1">
    <location>
        <begin position="395"/>
        <end position="415"/>
    </location>
</feature>
<feature type="transmembrane region" description="Helical" evidence="1">
    <location>
        <begin position="418"/>
        <end position="438"/>
    </location>
</feature>
<feature type="transmembrane region" description="Helical" evidence="1">
    <location>
        <begin position="484"/>
        <end position="504"/>
    </location>
</feature>
<comment type="function">
    <text evidence="1">NDH shuttles electrons from NAD(P)H:plastoquinone, via FMN and iron-sulfur (Fe-S) centers, to quinones in the photosynthetic chain and possibly in a chloroplast respiratory chain. The immediate electron acceptor for the enzyme in this species is believed to be plastoquinone. Couples the redox reaction to proton translocation, and thus conserves the redox energy in a proton gradient.</text>
</comment>
<comment type="catalytic activity">
    <reaction evidence="1">
        <text>a plastoquinone + NADH + (n+1) H(+)(in) = a plastoquinol + NAD(+) + n H(+)(out)</text>
        <dbReference type="Rhea" id="RHEA:42608"/>
        <dbReference type="Rhea" id="RHEA-COMP:9561"/>
        <dbReference type="Rhea" id="RHEA-COMP:9562"/>
        <dbReference type="ChEBI" id="CHEBI:15378"/>
        <dbReference type="ChEBI" id="CHEBI:17757"/>
        <dbReference type="ChEBI" id="CHEBI:57540"/>
        <dbReference type="ChEBI" id="CHEBI:57945"/>
        <dbReference type="ChEBI" id="CHEBI:62192"/>
    </reaction>
</comment>
<comment type="catalytic activity">
    <reaction evidence="1">
        <text>a plastoquinone + NADPH + (n+1) H(+)(in) = a plastoquinol + NADP(+) + n H(+)(out)</text>
        <dbReference type="Rhea" id="RHEA:42612"/>
        <dbReference type="Rhea" id="RHEA-COMP:9561"/>
        <dbReference type="Rhea" id="RHEA-COMP:9562"/>
        <dbReference type="ChEBI" id="CHEBI:15378"/>
        <dbReference type="ChEBI" id="CHEBI:17757"/>
        <dbReference type="ChEBI" id="CHEBI:57783"/>
        <dbReference type="ChEBI" id="CHEBI:58349"/>
        <dbReference type="ChEBI" id="CHEBI:62192"/>
    </reaction>
</comment>
<comment type="subunit">
    <text evidence="1">NDH is composed of at least 16 different subunits, 5 of which are encoded in the nucleus.</text>
</comment>
<comment type="subcellular location">
    <subcellularLocation>
        <location evidence="1">Plastid</location>
        <location evidence="1">Chloroplast thylakoid membrane</location>
        <topology evidence="1">Multi-pass membrane protein</topology>
    </subcellularLocation>
</comment>
<comment type="similarity">
    <text evidence="1">Belongs to the complex I subunit 2 family.</text>
</comment>
<keyword id="KW-0150">Chloroplast</keyword>
<keyword id="KW-0472">Membrane</keyword>
<keyword id="KW-0520">NAD</keyword>
<keyword id="KW-0521">NADP</keyword>
<keyword id="KW-0934">Plastid</keyword>
<keyword id="KW-0618">Plastoquinone</keyword>
<keyword id="KW-0874">Quinone</keyword>
<keyword id="KW-0793">Thylakoid</keyword>
<keyword id="KW-1278">Translocase</keyword>
<keyword id="KW-0812">Transmembrane</keyword>
<keyword id="KW-1133">Transmembrane helix</keyword>
<keyword id="KW-0813">Transport</keyword>
<reference key="1">
    <citation type="journal article" date="2008" name="Nucleic Acids Res.">
        <title>The complete nucleotide sequences of the five genetically distinct plastid genomes of Oenothera, subsection Oenothera: I. Sequence evaluation and plastome evolution.</title>
        <authorList>
            <person name="Greiner S."/>
            <person name="Wang X."/>
            <person name="Rauwolf U."/>
            <person name="Silber M.V."/>
            <person name="Mayer K."/>
            <person name="Meurer J."/>
            <person name="Haberer G."/>
            <person name="Herrmann R.G."/>
        </authorList>
    </citation>
    <scope>NUCLEOTIDE SEQUENCE [LARGE SCALE GENOMIC DNA]</scope>
    <source>
        <strain>cv. Atrovirens</strain>
    </source>
</reference>
<protein>
    <recommendedName>
        <fullName evidence="1">NAD(P)H-quinone oxidoreductase subunit 2 A, chloroplastic</fullName>
        <ecNumber evidence="1">7.1.1.-</ecNumber>
    </recommendedName>
    <alternativeName>
        <fullName evidence="1">NAD(P)H dehydrogenase, subunit 2 A</fullName>
    </alternativeName>
    <alternativeName>
        <fullName evidence="1">NADH-plastoquinone oxidoreductase subunit 2 A</fullName>
    </alternativeName>
</protein>